<evidence type="ECO:0000255" key="1">
    <source>
        <dbReference type="HAMAP-Rule" id="MF_00948"/>
    </source>
</evidence>
<accession>Q9PK75</accession>
<reference key="1">
    <citation type="journal article" date="2000" name="Nucleic Acids Res.">
        <title>Genome sequences of Chlamydia trachomatis MoPn and Chlamydia pneumoniae AR39.</title>
        <authorList>
            <person name="Read T.D."/>
            <person name="Brunham R.C."/>
            <person name="Shen C."/>
            <person name="Gill S.R."/>
            <person name="Heidelberg J.F."/>
            <person name="White O."/>
            <person name="Hickey E.K."/>
            <person name="Peterson J.D."/>
            <person name="Utterback T.R."/>
            <person name="Berry K.J."/>
            <person name="Bass S."/>
            <person name="Linher K.D."/>
            <person name="Weidman J.F."/>
            <person name="Khouri H.M."/>
            <person name="Craven B."/>
            <person name="Bowman C."/>
            <person name="Dodson R.J."/>
            <person name="Gwinn M.L."/>
            <person name="Nelson W.C."/>
            <person name="DeBoy R.T."/>
            <person name="Kolonay J.F."/>
            <person name="McClarty G."/>
            <person name="Salzberg S.L."/>
            <person name="Eisen J.A."/>
            <person name="Fraser C.M."/>
        </authorList>
    </citation>
    <scope>NUCLEOTIDE SEQUENCE [LARGE SCALE GENOMIC DNA]</scope>
    <source>
        <strain>MoPn / Nigg</strain>
    </source>
</reference>
<dbReference type="EMBL" id="AE002160">
    <property type="protein sequence ID" value="AAF39426.1"/>
    <property type="molecule type" value="Genomic_DNA"/>
</dbReference>
<dbReference type="PIR" id="D81685">
    <property type="entry name" value="D81685"/>
</dbReference>
<dbReference type="RefSeq" id="WP_010230925.1">
    <property type="nucleotide sequence ID" value="NZ_CP063055.1"/>
</dbReference>
<dbReference type="SMR" id="Q9PK75"/>
<dbReference type="GeneID" id="1245953"/>
<dbReference type="KEGG" id="cmu:TC_0594"/>
<dbReference type="eggNOG" id="COG0250">
    <property type="taxonomic scope" value="Bacteria"/>
</dbReference>
<dbReference type="HOGENOM" id="CLU_067287_1_0_0"/>
<dbReference type="OrthoDB" id="9809075at2"/>
<dbReference type="Proteomes" id="UP000000800">
    <property type="component" value="Chromosome"/>
</dbReference>
<dbReference type="GO" id="GO:0005829">
    <property type="term" value="C:cytosol"/>
    <property type="evidence" value="ECO:0007669"/>
    <property type="project" value="TreeGrafter"/>
</dbReference>
<dbReference type="GO" id="GO:0006353">
    <property type="term" value="P:DNA-templated transcription termination"/>
    <property type="evidence" value="ECO:0007669"/>
    <property type="project" value="UniProtKB-UniRule"/>
</dbReference>
<dbReference type="GO" id="GO:0032784">
    <property type="term" value="P:regulation of DNA-templated transcription elongation"/>
    <property type="evidence" value="ECO:0007669"/>
    <property type="project" value="InterPro"/>
</dbReference>
<dbReference type="GO" id="GO:0031564">
    <property type="term" value="P:transcription antitermination"/>
    <property type="evidence" value="ECO:0007669"/>
    <property type="project" value="UniProtKB-UniRule"/>
</dbReference>
<dbReference type="GO" id="GO:0140673">
    <property type="term" value="P:transcription elongation-coupled chromatin remodeling"/>
    <property type="evidence" value="ECO:0007669"/>
    <property type="project" value="InterPro"/>
</dbReference>
<dbReference type="CDD" id="cd06091">
    <property type="entry name" value="KOW_NusG"/>
    <property type="match status" value="1"/>
</dbReference>
<dbReference type="CDD" id="cd09891">
    <property type="entry name" value="NGN_Bact_1"/>
    <property type="match status" value="1"/>
</dbReference>
<dbReference type="Gene3D" id="2.30.30.30">
    <property type="match status" value="1"/>
</dbReference>
<dbReference type="Gene3D" id="3.30.70.940">
    <property type="entry name" value="NusG, N-terminal domain"/>
    <property type="match status" value="1"/>
</dbReference>
<dbReference type="HAMAP" id="MF_00948">
    <property type="entry name" value="NusG"/>
    <property type="match status" value="1"/>
</dbReference>
<dbReference type="InterPro" id="IPR005824">
    <property type="entry name" value="KOW"/>
</dbReference>
<dbReference type="InterPro" id="IPR047050">
    <property type="entry name" value="NGN"/>
</dbReference>
<dbReference type="InterPro" id="IPR006645">
    <property type="entry name" value="NGN-like_dom"/>
</dbReference>
<dbReference type="InterPro" id="IPR036735">
    <property type="entry name" value="NGN_dom_sf"/>
</dbReference>
<dbReference type="InterPro" id="IPR043425">
    <property type="entry name" value="NusG-like"/>
</dbReference>
<dbReference type="InterPro" id="IPR014722">
    <property type="entry name" value="Rib_uL2_dom2"/>
</dbReference>
<dbReference type="InterPro" id="IPR001062">
    <property type="entry name" value="Transcrpt_antiterm_NusG"/>
</dbReference>
<dbReference type="InterPro" id="IPR008991">
    <property type="entry name" value="Translation_prot_SH3-like_sf"/>
</dbReference>
<dbReference type="NCBIfam" id="TIGR00922">
    <property type="entry name" value="nusG"/>
    <property type="match status" value="1"/>
</dbReference>
<dbReference type="PANTHER" id="PTHR30265">
    <property type="entry name" value="RHO-INTERACTING TRANSCRIPTION TERMINATION FACTOR NUSG"/>
    <property type="match status" value="1"/>
</dbReference>
<dbReference type="PANTHER" id="PTHR30265:SF2">
    <property type="entry name" value="TRANSCRIPTION TERMINATION_ANTITERMINATION PROTEIN NUSG"/>
    <property type="match status" value="1"/>
</dbReference>
<dbReference type="Pfam" id="PF02357">
    <property type="entry name" value="NusG"/>
    <property type="match status" value="1"/>
</dbReference>
<dbReference type="PRINTS" id="PR00338">
    <property type="entry name" value="NUSGTNSCPFCT"/>
</dbReference>
<dbReference type="SMART" id="SM00739">
    <property type="entry name" value="KOW"/>
    <property type="match status" value="1"/>
</dbReference>
<dbReference type="SMART" id="SM00738">
    <property type="entry name" value="NGN"/>
    <property type="match status" value="1"/>
</dbReference>
<dbReference type="SUPFAM" id="SSF82679">
    <property type="entry name" value="N-utilization substance G protein NusG, N-terminal domain"/>
    <property type="match status" value="1"/>
</dbReference>
<dbReference type="SUPFAM" id="SSF50104">
    <property type="entry name" value="Translation proteins SH3-like domain"/>
    <property type="match status" value="1"/>
</dbReference>
<organism>
    <name type="scientific">Chlamydia muridarum (strain MoPn / Nigg)</name>
    <dbReference type="NCBI Taxonomy" id="243161"/>
    <lineage>
        <taxon>Bacteria</taxon>
        <taxon>Pseudomonadati</taxon>
        <taxon>Chlamydiota</taxon>
        <taxon>Chlamydiia</taxon>
        <taxon>Chlamydiales</taxon>
        <taxon>Chlamydiaceae</taxon>
        <taxon>Chlamydia/Chlamydophila group</taxon>
        <taxon>Chlamydia</taxon>
    </lineage>
</organism>
<comment type="function">
    <text evidence="1">Participates in transcription elongation, termination and antitermination.</text>
</comment>
<comment type="similarity">
    <text evidence="1">Belongs to the NusG family.</text>
</comment>
<proteinExistence type="inferred from homology"/>
<protein>
    <recommendedName>
        <fullName evidence="1">Transcription termination/antitermination protein NusG</fullName>
    </recommendedName>
</protein>
<keyword id="KW-0804">Transcription</keyword>
<keyword id="KW-0889">Transcription antitermination</keyword>
<keyword id="KW-0805">Transcription regulation</keyword>
<keyword id="KW-0806">Transcription termination</keyword>
<sequence>MFKWYVVQVFTAQEKKVKKSLEDFKEASGMSDFIQQIILPSENVMEVKKGEHKIVEKYIWPGYLLVKMHLTDESWSYVKKTQGVVEFLGGGAPVALSEEEVKNILADLEEKKSGVVQKHKFEVGSQVKINDGVFVNFVGVVSEVFHDKGRLSVMVSIFGRETRVDDLEFWQVEEVAPGQESE</sequence>
<feature type="chain" id="PRO_0000113922" description="Transcription termination/antitermination protein NusG">
    <location>
        <begin position="1"/>
        <end position="182"/>
    </location>
</feature>
<name>NUSG_CHLMU</name>
<gene>
    <name evidence="1" type="primary">nusG</name>
    <name type="ordered locus">TC_0594</name>
</gene>